<proteinExistence type="evidence at protein level"/>
<protein>
    <recommendedName>
        <fullName>Uncharacterized protein PF3D7_0210200</fullName>
    </recommendedName>
</protein>
<accession>O96185</accession>
<accession>A0A143ZWL6</accession>
<dbReference type="EMBL" id="LN999943">
    <property type="protein sequence ID" value="CZT98116.1"/>
    <property type="molecule type" value="Genomic_DNA"/>
</dbReference>
<dbReference type="PIR" id="D71614">
    <property type="entry name" value="D71614"/>
</dbReference>
<dbReference type="RefSeq" id="XP_024329076.1">
    <property type="nucleotide sequence ID" value="XM_024473265.1"/>
</dbReference>
<dbReference type="SMR" id="O96185"/>
<dbReference type="FunCoup" id="O96185">
    <property type="interactions" value="10"/>
</dbReference>
<dbReference type="STRING" id="36329.O96185"/>
<dbReference type="SwissPalm" id="O96185"/>
<dbReference type="PaxDb" id="5833-PFB0460c"/>
<dbReference type="EnsemblProtists" id="CZT98116">
    <property type="protein sequence ID" value="CZT98116"/>
    <property type="gene ID" value="PF3D7_0210200"/>
</dbReference>
<dbReference type="GeneID" id="812692"/>
<dbReference type="VEuPathDB" id="PlasmoDB:PF3D7_0210200"/>
<dbReference type="InParanoid" id="O96185"/>
<dbReference type="OMA" id="FSNDHTH"/>
<dbReference type="OrthoDB" id="310853at2759"/>
<dbReference type="Proteomes" id="UP000001450">
    <property type="component" value="Chromosome 2"/>
</dbReference>
<dbReference type="GO" id="GO:0003690">
    <property type="term" value="F:double-stranded DNA binding"/>
    <property type="evidence" value="ECO:0000318"/>
    <property type="project" value="GO_Central"/>
</dbReference>
<dbReference type="GO" id="GO:0003697">
    <property type="term" value="F:single-stranded DNA binding"/>
    <property type="evidence" value="ECO:0000318"/>
    <property type="project" value="GO_Central"/>
</dbReference>
<dbReference type="GO" id="GO:0000724">
    <property type="term" value="P:double-strand break repair via homologous recombination"/>
    <property type="evidence" value="ECO:0000318"/>
    <property type="project" value="GO_Central"/>
</dbReference>
<dbReference type="GO" id="GO:0036297">
    <property type="term" value="P:interstrand cross-link repair"/>
    <property type="evidence" value="ECO:0000318"/>
    <property type="project" value="GO_Central"/>
</dbReference>
<dbReference type="InterPro" id="IPR052003">
    <property type="entry name" value="HR_DNA-Binding_Protein"/>
</dbReference>
<dbReference type="PANTHER" id="PTHR15361:SF5">
    <property type="entry name" value="C3H1-TYPE DOMAIN-CONTAINING PROTEIN"/>
    <property type="match status" value="1"/>
</dbReference>
<dbReference type="PANTHER" id="PTHR15361">
    <property type="entry name" value="RAD51/NUKS-INTERACTING PROTEIN"/>
    <property type="match status" value="1"/>
</dbReference>
<comment type="biotechnology">
    <text evidence="3">Possible candidate for an effective malaria vaccine as determined by epitope response in sera.</text>
</comment>
<sequence length="2588" mass="310026">MSFKNNEKYMDEENDQESDDEFFKVKRKPQINVDAEEDEDNNNNNNNNNNNSNISNHMNEFDLEEEDEDDYEDENYIVGETIEIDESKLKNEKIEEDIFNENNLLHGIKTRELLEQEILILFSNMLKKETILCKDIKSGSNDPMDEISLFKDDMVDDKELKDFEKSSLKIKNKEVYNFIYNKMNLHIKENKKKDEKEKKNKIHNNDENNNMIYYKNIDKTHYILDNNVVHILNDINTYLKRERDYMNRKFGTYIDSTYKNPMYVTLYIFNNDILKDIILQVIDIIRNDFDHAIYKDIDENQLIKNLIILINHLTTRPSKEWFDYWKRHMPTFNDKKSEYNVYKYLQLQKSDRRILYDTLKNDIYIKELQKRSDILDQYQKGLQSLKCLLANKNFLTMLNEFRYNTQLFIDADYREIEENEKVMEMQRRENELLEEKKRLKQELESYHDDSSTDDDSSADEQQDERREVLTHNDPINKKDDPINKNDDPINKNDDPINKNDDNINKNDDNINKNDDNICNSNDHTHNSNDHTHNSNDHTHNSNDHTHNSNDHTHFSNDHTHFSNDHTHFSNDHTHFSNDHTHNSNDHTHNSKNHAHFSNEVDKTNDYKYHSEKKKKNNVIRSKMYNIKKRISKINDELHELSNFFLIDKTKREKLMFEYNENVFLVRNILTQVLGIRNKTDNRDINLNNVHYAILQNILDKHGCLHLIIDEMRDLFEKEIKKYEEESNIYIPYIKQNTMKQIWEYIRLFYNIICYIDPIDLVKSLTYQKSTHIIKKEKKKTKTDMDNNNNNNNNNNNDNNNIMMNQKFLNNYHNKKHLNTSDNVNNMKTNNLRNYNKDINLKNVGKDMNKRKSMAQQQNKRKSNYINIKQKNLMITHLSRINPLLAKSKVRKPNEEKHLKKRKRKFIERKNLIDHYEIFSFEDFSFNMFSEDRLFNKYNILDIFDYSNLYKIQDFLNNIIGINEEFESIYENDDNFHYSLKVFLNICIKDLRRCINEFYNFQWDIKIILNMHAWIVTYYTNLYIYENRKRFYNSRNKNKNNKEHQMNRDDERKCTKEYTNQNEGEMKYDHNRKREDEQKNHKYCNINCNINCNINCNKNCNKNCNINYNNGDNNVYDNNVYDNNDDYNDDYNDDYNDDYNDDYNDVNQNTYVKHNNQNENSSLFISRIQMVLGLQMYIGDNSIHSEFLCDTFQRVIREEKMMKNSSQVILCCLRCLYSDLNLLDIHSLSTDENVKSICKTSLDNLLKRNILTTLSWILQNFKILSHEKHIFIYSLKCSLLIINLLAKLGGTTYIIKEKKNIHNDSHDDNNDDSVNDSNDDTNNVNVNVNVNDYYDDDDDDNNNNNRIDKKKKHKKKKYNNEPMEKIDVSDLVEEIFNGKIVNICMHILENFKRNSLYINDLIITYFEHLIKHKNNEYNFLIFFDIKYFLIFKDIINDPEAYNNPHYYWIPCFFENIIACFFKIWKSNYFIVNELLFTKDINKNNSNLLNEKYLLSIFSNYNEGNDPFIFQQLNEGIYINDIFINLNNKKRLESLEWSNEDIENLKFYFKQFKHMHNFLPFISEMLNKSSNVVKNQLIYLNYLDKRGKVIYDDQYESDNMISSSSSSSSSSSSSSSLSSSSSLSCVSYLSEAQNSNNKSNDSLKMSYSKKKKQHTNEHMNHHQNYPMRKTKQPLLYIIYKLKKLNYNNNNNNNNNNNNNDDNTKDQPKLTVNEINCNVDTVLEEINVNLKSLYELKKLSKNKIFNNKALAFDIPLSISPDLLEHHYFKKLLKHIGFLYNQNVDEWILNENLDIDIFKKTIDKFEQLYIMDIQKLKKKLSSHKLNVQTNDQGERQDERNIDHEDEPVSSNTEDDHEENDYFTYDHIDERDHKKCDDKKYSDNTNETYDDQKCDDNTNETYDNEKCDEAINNKHMDEQELHLRSPSIKTKGTLKLLKLMYEFFISNDDECRLFFNNLINTIKEKCIIIFEKLKKCKLDHDILYKDTTNNYYDHTSHPVQICFEDYKIYLNNNEKSILKGRCKHKNILEELLEILGLYISNVPCLIISKHIKEEEFYERITTINDHKTLSLNDLNMIITTKEKEIKEKKKKKKEERKPSAHQKFAFIKSICEYLNYNYIIRNTYKSEQNTNNHNDNNIIYNNTYSKLKDTYFGDDKLLTALYDKLNIWNNRRKKKNDDMVLEIPIPQFVGSMCNVGTSEGEHEQKLDESKNIYTKEYNNDEKFLKSHINCQDDTQKISSLVIHIGICLKGEYHDESILKWTCEQIHREWMKIMLKLFYNILYDTTYNVIGKLFKEYKNIKEILNDQSSDFLDMYKSDKKKKKKKKELDDVEKEGQPKMGVGNDDNINGDKNIYDDNINGDDNINGDKNIYDDDKNIYDDDDNINGDKNIYDGNYKISYSKEYEHIHMDEKKEVEKEYHIYDNNNNNDNNNDNNNDNNNNSHTLAFQNRTQGETTFTNINNITNDICEKGNKYTSNVNNINNINEMTCKESVEVNEIIQKTNKRKFHNIELKEHYCYDLFKKRKLENTYRNTYKKNRKIIINCLLTNKNIFQYKEHDIVNKVKQIFIKAKHMATNGDLRNRWKSREDVKKILLL</sequence>
<reference key="1">
    <citation type="journal article" date="1998" name="Science">
        <title>Chromosome 2 sequence of the human malaria parasite Plasmodium falciparum.</title>
        <authorList>
            <person name="Gardner M.J."/>
            <person name="Tettelin H."/>
            <person name="Carucci D.J."/>
            <person name="Cummings L.M."/>
            <person name="Aravind L."/>
            <person name="Koonin E.V."/>
            <person name="Shallom S.J."/>
            <person name="Mason T."/>
            <person name="Yu K."/>
            <person name="Fujii C."/>
            <person name="Pederson J."/>
            <person name="Shen K."/>
            <person name="Jing J."/>
            <person name="Aston C."/>
            <person name="Lai Z."/>
            <person name="Schwartz D.C."/>
            <person name="Pertea M."/>
            <person name="Salzberg S.L."/>
            <person name="Zhou L."/>
            <person name="Sutton G.G."/>
            <person name="Clayton R."/>
            <person name="White O."/>
            <person name="Smith H.O."/>
            <person name="Fraser C.M."/>
            <person name="Adams M.D."/>
            <person name="Venter J.C."/>
            <person name="Hoffman S.L."/>
        </authorList>
    </citation>
    <scope>NUCLEOTIDE SEQUENCE [LARGE SCALE GENOMIC DNA]</scope>
    <source>
        <strain>3D7</strain>
    </source>
</reference>
<reference key="2">
    <citation type="journal article" date="2002" name="Nature">
        <title>Genome sequence of the human malaria parasite Plasmodium falciparum.</title>
        <authorList>
            <person name="Gardner M.J."/>
            <person name="Hall N."/>
            <person name="Fung E."/>
            <person name="White O."/>
            <person name="Berriman M."/>
            <person name="Hyman R.W."/>
            <person name="Carlton J.M."/>
            <person name="Pain A."/>
            <person name="Nelson K.E."/>
            <person name="Bowman S."/>
            <person name="Paulsen I.T."/>
            <person name="James K.D."/>
            <person name="Eisen J.A."/>
            <person name="Rutherford K.M."/>
            <person name="Salzberg S.L."/>
            <person name="Craig A."/>
            <person name="Kyes S."/>
            <person name="Chan M.-S."/>
            <person name="Nene V."/>
            <person name="Shallom S.J."/>
            <person name="Suh B."/>
            <person name="Peterson J."/>
            <person name="Angiuoli S."/>
            <person name="Pertea M."/>
            <person name="Allen J."/>
            <person name="Selengut J."/>
            <person name="Haft D."/>
            <person name="Mather M.W."/>
            <person name="Vaidya A.B."/>
            <person name="Martin D.M.A."/>
            <person name="Fairlamb A.H."/>
            <person name="Fraunholz M.J."/>
            <person name="Roos D.S."/>
            <person name="Ralph S.A."/>
            <person name="McFadden G.I."/>
            <person name="Cummings L.M."/>
            <person name="Subramanian G.M."/>
            <person name="Mungall C."/>
            <person name="Venter J.C."/>
            <person name="Carucci D.J."/>
            <person name="Hoffman S.L."/>
            <person name="Newbold C."/>
            <person name="Davis R.W."/>
            <person name="Fraser C.M."/>
            <person name="Barrell B.G."/>
        </authorList>
    </citation>
    <scope>NUCLEOTIDE SEQUENCE [LARGE SCALE GENOMIC DNA]</scope>
    <source>
        <strain>3D7</strain>
    </source>
</reference>
<reference evidence="4" key="3">
    <citation type="journal article" date="2007" name="PLoS ONE">
        <title>Rapid identification of malaria vaccine candidates based on alpha-helical coiled coil protein motif.</title>
        <authorList>
            <person name="Villard V."/>
            <person name="Agak G.W."/>
            <person name="Frank G."/>
            <person name="Jafarshad A."/>
            <person name="Servis C."/>
            <person name="Nebie I."/>
            <person name="Sirima S.B."/>
            <person name="Felger I."/>
            <person name="Arevalo-Herrera M."/>
            <person name="Herrera S."/>
            <person name="Heitz F."/>
            <person name="Baecker V."/>
            <person name="Druilhe P."/>
            <person name="Kajava A.V."/>
            <person name="Corradin G."/>
        </authorList>
    </citation>
    <scope>SYNTHESIS OF 616-645</scope>
    <scope>POSSIBLE CANDIDATE MALARIA EPITOPE</scope>
</reference>
<evidence type="ECO:0000255" key="1"/>
<evidence type="ECO:0000256" key="2">
    <source>
        <dbReference type="SAM" id="MobiDB-lite"/>
    </source>
</evidence>
<evidence type="ECO:0000269" key="3">
    <source>
    </source>
</evidence>
<evidence type="ECO:0000305" key="4"/>
<evidence type="ECO:0000312" key="5">
    <source>
        <dbReference type="EMBL" id="CZT98116.1"/>
    </source>
</evidence>
<organism>
    <name type="scientific">Plasmodium falciparum (isolate 3D7)</name>
    <dbReference type="NCBI Taxonomy" id="36329"/>
    <lineage>
        <taxon>Eukaryota</taxon>
        <taxon>Sar</taxon>
        <taxon>Alveolata</taxon>
        <taxon>Apicomplexa</taxon>
        <taxon>Aconoidasida</taxon>
        <taxon>Haemosporida</taxon>
        <taxon>Plasmodiidae</taxon>
        <taxon>Plasmodium</taxon>
        <taxon>Plasmodium (Laverania)</taxon>
    </lineage>
</organism>
<gene>
    <name evidence="5" type="ORF">PF3D7_0210200</name>
    <name type="ORF">PFB0460c</name>
</gene>
<keyword id="KW-0175">Coiled coil</keyword>
<keyword id="KW-0477">Merozoite</keyword>
<keyword id="KW-1185">Reference proteome</keyword>
<name>YPF08_PLAF7</name>
<feature type="chain" id="PRO_0000388761" description="Uncharacterized protein PF3D7_0210200">
    <location>
        <begin position="1"/>
        <end position="2588"/>
    </location>
</feature>
<feature type="region of interest" description="Disordered" evidence="2">
    <location>
        <begin position="1"/>
        <end position="56"/>
    </location>
</feature>
<feature type="region of interest" description="Disordered" evidence="2">
    <location>
        <begin position="442"/>
        <end position="598"/>
    </location>
</feature>
<feature type="region of interest" description="Disordered" evidence="2">
    <location>
        <begin position="774"/>
        <end position="801"/>
    </location>
</feature>
<feature type="region of interest" description="Disordered" evidence="2">
    <location>
        <begin position="1303"/>
        <end position="1357"/>
    </location>
</feature>
<feature type="region of interest" description="Disordered" evidence="2">
    <location>
        <begin position="1631"/>
        <end position="1662"/>
    </location>
</feature>
<feature type="region of interest" description="Disordered" evidence="2">
    <location>
        <begin position="1685"/>
        <end position="1705"/>
    </location>
</feature>
<feature type="region of interest" description="Disordered" evidence="2">
    <location>
        <begin position="1820"/>
        <end position="1856"/>
    </location>
</feature>
<feature type="region of interest" description="Disordered" evidence="2">
    <location>
        <begin position="2317"/>
        <end position="2342"/>
    </location>
</feature>
<feature type="region of interest" description="Disordered" evidence="2">
    <location>
        <begin position="2415"/>
        <end position="2437"/>
    </location>
</feature>
<feature type="coiled-coil region" evidence="1">
    <location>
        <begin position="413"/>
        <end position="452"/>
    </location>
</feature>
<feature type="compositionally biased region" description="Basic and acidic residues" evidence="2">
    <location>
        <begin position="1"/>
        <end position="11"/>
    </location>
</feature>
<feature type="compositionally biased region" description="Low complexity" evidence="2">
    <location>
        <begin position="42"/>
        <end position="56"/>
    </location>
</feature>
<feature type="compositionally biased region" description="Acidic residues" evidence="2">
    <location>
        <begin position="451"/>
        <end position="462"/>
    </location>
</feature>
<feature type="compositionally biased region" description="Basic and acidic residues" evidence="2">
    <location>
        <begin position="463"/>
        <end position="515"/>
    </location>
</feature>
<feature type="compositionally biased region" description="Basic and acidic residues" evidence="2">
    <location>
        <begin position="522"/>
        <end position="588"/>
    </location>
</feature>
<feature type="compositionally biased region" description="Low complexity" evidence="2">
    <location>
        <begin position="785"/>
        <end position="801"/>
    </location>
</feature>
<feature type="compositionally biased region" description="Acidic residues" evidence="2">
    <location>
        <begin position="1308"/>
        <end position="1318"/>
    </location>
</feature>
<feature type="compositionally biased region" description="Low complexity" evidence="2">
    <location>
        <begin position="1319"/>
        <end position="1331"/>
    </location>
</feature>
<feature type="compositionally biased region" description="Basic residues" evidence="2">
    <location>
        <begin position="1347"/>
        <end position="1356"/>
    </location>
</feature>
<feature type="compositionally biased region" description="Polar residues" evidence="2">
    <location>
        <begin position="1631"/>
        <end position="1643"/>
    </location>
</feature>
<feature type="compositionally biased region" description="Low complexity" evidence="2">
    <location>
        <begin position="1685"/>
        <end position="1698"/>
    </location>
</feature>
<feature type="compositionally biased region" description="Basic and acidic residues" evidence="2">
    <location>
        <begin position="1828"/>
        <end position="1838"/>
    </location>
</feature>
<feature type="compositionally biased region" description="Acidic residues" evidence="2">
    <location>
        <begin position="1839"/>
        <end position="1856"/>
    </location>
</feature>
<feature type="compositionally biased region" description="Low complexity" evidence="2">
    <location>
        <begin position="2416"/>
        <end position="2434"/>
    </location>
</feature>